<feature type="transit peptide" description="Mitochondrion" evidence="4">
    <location>
        <begin position="1"/>
        <end status="unknown"/>
    </location>
</feature>
<feature type="chain" id="PRO_0000437211" description="Essential MCU regulator, mitochondrial">
    <location>
        <begin status="unknown"/>
        <end position="90"/>
    </location>
</feature>
<feature type="transmembrane region" description="Helical" evidence="2">
    <location>
        <begin position="49"/>
        <end position="68"/>
    </location>
</feature>
<comment type="function">
    <text evidence="3">Essential regulatory subunit of the mitochondrial calcium uniporter (mcu-1) channel, a protein that mediates calcium uptake into mitochondria.</text>
</comment>
<comment type="subcellular location">
    <subcellularLocation>
        <location evidence="1">Mitochondrion inner membrane</location>
        <topology evidence="1">Single-pass membrane protein</topology>
    </subcellularLocation>
</comment>
<comment type="similarity">
    <text evidence="4">Belongs to the SMDT1/EMRE family.</text>
</comment>
<proteinExistence type="inferred from homology"/>
<protein>
    <recommendedName>
        <fullName evidence="1">Essential MCU regulator, mitochondrial</fullName>
    </recommendedName>
</protein>
<sequence>MTSKTVFQNAFKTFLDFAINSLPSTQGGLNITATAPGGVGQRPFTNKAGVLKLIFVSASSLYIGGLIAHKGASYLEENEIFVPTDEDDDD</sequence>
<organism>
    <name type="scientific">Caenorhabditis elegans</name>
    <dbReference type="NCBI Taxonomy" id="6239"/>
    <lineage>
        <taxon>Eukaryota</taxon>
        <taxon>Metazoa</taxon>
        <taxon>Ecdysozoa</taxon>
        <taxon>Nematoda</taxon>
        <taxon>Chromadorea</taxon>
        <taxon>Rhabditida</taxon>
        <taxon>Rhabditina</taxon>
        <taxon>Rhabditomorpha</taxon>
        <taxon>Rhabditoidea</taxon>
        <taxon>Rhabditidae</taxon>
        <taxon>Peloderinae</taxon>
        <taxon>Caenorhabditis</taxon>
    </lineage>
</organism>
<reference key="1">
    <citation type="journal article" date="1998" name="Science">
        <title>Genome sequence of the nematode C. elegans: a platform for investigating biology.</title>
        <authorList>
            <consortium name="The C. elegans sequencing consortium"/>
        </authorList>
    </citation>
    <scope>NUCLEOTIDE SEQUENCE [LARGE SCALE GENOMIC DNA]</scope>
    <source>
        <strain>Bristol N2</strain>
    </source>
</reference>
<reference key="2">
    <citation type="journal article" date="2016" name="Elife">
        <title>Dual functions of a small regulatory subunit in the mitochondrial calcium uniporter complex.</title>
        <authorList>
            <person name="Tsai M.F."/>
            <person name="Phillips C.B."/>
            <person name="Ranaghan M."/>
            <person name="Tsai C.W."/>
            <person name="Wu Y."/>
            <person name="Willliams C."/>
            <person name="Miller C."/>
        </authorList>
    </citation>
    <scope>FUNCTION</scope>
</reference>
<name>EMRE_CAEEL</name>
<gene>
    <name evidence="5" type="primary">emre-1</name>
    <name evidence="5" type="synonym">tag-299</name>
    <name evidence="5" type="ORF">F20D1.10</name>
</gene>
<evidence type="ECO:0000250" key="1">
    <source>
        <dbReference type="UniProtKB" id="Q9H4I9"/>
    </source>
</evidence>
<evidence type="ECO:0000255" key="2"/>
<evidence type="ECO:0000269" key="3">
    <source>
    </source>
</evidence>
<evidence type="ECO:0000305" key="4"/>
<evidence type="ECO:0000312" key="5">
    <source>
        <dbReference type="WormBase" id="F20D1.10"/>
    </source>
</evidence>
<keyword id="KW-0106">Calcium</keyword>
<keyword id="KW-0109">Calcium transport</keyword>
<keyword id="KW-0406">Ion transport</keyword>
<keyword id="KW-0472">Membrane</keyword>
<keyword id="KW-0496">Mitochondrion</keyword>
<keyword id="KW-0999">Mitochondrion inner membrane</keyword>
<keyword id="KW-1185">Reference proteome</keyword>
<keyword id="KW-0809">Transit peptide</keyword>
<keyword id="KW-0812">Transmembrane</keyword>
<keyword id="KW-1133">Transmembrane helix</keyword>
<keyword id="KW-0813">Transport</keyword>
<accession>Q9U3I4</accession>
<dbReference type="EMBL" id="BX284606">
    <property type="protein sequence ID" value="CAB54233.1"/>
    <property type="molecule type" value="Genomic_DNA"/>
</dbReference>
<dbReference type="PIR" id="T21150">
    <property type="entry name" value="T21150"/>
</dbReference>
<dbReference type="RefSeq" id="NP_510487.1">
    <property type="nucleotide sequence ID" value="NM_078086.7"/>
</dbReference>
<dbReference type="SMR" id="Q9U3I4"/>
<dbReference type="DIP" id="DIP-25311N"/>
<dbReference type="FunCoup" id="Q9U3I4">
    <property type="interactions" value="1000"/>
</dbReference>
<dbReference type="STRING" id="6239.F20D1.10.3"/>
<dbReference type="TCDB" id="8.A.45.1.3">
    <property type="family name" value="the essential mcu regulator emre (emre) family"/>
</dbReference>
<dbReference type="PaxDb" id="6239-F20D1.10.2"/>
<dbReference type="EnsemblMetazoa" id="F20D1.10.1">
    <property type="protein sequence ID" value="F20D1.10.1"/>
    <property type="gene ID" value="WBGene00008980"/>
</dbReference>
<dbReference type="GeneID" id="181594"/>
<dbReference type="KEGG" id="cel:CELE_F20D1.10"/>
<dbReference type="UCSC" id="F20D1.10.1">
    <property type="organism name" value="c. elegans"/>
</dbReference>
<dbReference type="AGR" id="WB:WBGene00008980"/>
<dbReference type="CTD" id="181594"/>
<dbReference type="WormBase" id="F20D1.10">
    <property type="protein sequence ID" value="CE23677"/>
    <property type="gene ID" value="WBGene00008980"/>
    <property type="gene designation" value="emre-1"/>
</dbReference>
<dbReference type="eggNOG" id="KOG4542">
    <property type="taxonomic scope" value="Eukaryota"/>
</dbReference>
<dbReference type="GeneTree" id="ENSGT00390000017489"/>
<dbReference type="HOGENOM" id="CLU_172921_2_1_1"/>
<dbReference type="InParanoid" id="Q9U3I4"/>
<dbReference type="OMA" id="YTTTYLQ"/>
<dbReference type="OrthoDB" id="10039145at2759"/>
<dbReference type="PhylomeDB" id="Q9U3I4"/>
<dbReference type="Reactome" id="R-CEL-8949215">
    <property type="pathway name" value="Mitochondrial calcium ion transport"/>
</dbReference>
<dbReference type="Reactome" id="R-CEL-8949664">
    <property type="pathway name" value="Processing of SMDT1"/>
</dbReference>
<dbReference type="Reactome" id="R-CEL-9837999">
    <property type="pathway name" value="Mitochondrial protein degradation"/>
</dbReference>
<dbReference type="PRO" id="PR:Q9U3I4"/>
<dbReference type="Proteomes" id="UP000001940">
    <property type="component" value="Chromosome X"/>
</dbReference>
<dbReference type="Bgee" id="WBGene00008980">
    <property type="expression patterns" value="Expressed in larva and 4 other cell types or tissues"/>
</dbReference>
<dbReference type="GO" id="GO:0005739">
    <property type="term" value="C:mitochondrion"/>
    <property type="evidence" value="ECO:0007005"/>
    <property type="project" value="WormBase"/>
</dbReference>
<dbReference type="GO" id="GO:1990246">
    <property type="term" value="C:uniplex complex"/>
    <property type="evidence" value="ECO:0000318"/>
    <property type="project" value="GO_Central"/>
</dbReference>
<dbReference type="GO" id="GO:0036444">
    <property type="term" value="P:calcium import into the mitochondrion"/>
    <property type="evidence" value="ECO:0000318"/>
    <property type="project" value="GO_Central"/>
</dbReference>
<dbReference type="GO" id="GO:0051560">
    <property type="term" value="P:mitochondrial calcium ion homeostasis"/>
    <property type="evidence" value="ECO:0000315"/>
    <property type="project" value="UniProtKB"/>
</dbReference>
<dbReference type="GO" id="GO:0006851">
    <property type="term" value="P:mitochondrial calcium ion transmembrane transport"/>
    <property type="evidence" value="ECO:0000315"/>
    <property type="project" value="UniProtKB"/>
</dbReference>
<dbReference type="InterPro" id="IPR018782">
    <property type="entry name" value="MCU_reg"/>
</dbReference>
<dbReference type="PANTHER" id="PTHR33904">
    <property type="entry name" value="ESSENTIAL MCU REGULATOR, MITOCHONDRIAL"/>
    <property type="match status" value="1"/>
</dbReference>
<dbReference type="PANTHER" id="PTHR33904:SF1">
    <property type="entry name" value="ESSENTIAL MCU REGULATOR, MITOCHONDRIAL"/>
    <property type="match status" value="1"/>
</dbReference>
<dbReference type="Pfam" id="PF10161">
    <property type="entry name" value="DDDD"/>
    <property type="match status" value="1"/>
</dbReference>